<feature type="chain" id="PRO_1000014164" description="Small ribosomal subunit protein uS7">
    <location>
        <begin position="1"/>
        <end position="157"/>
    </location>
</feature>
<proteinExistence type="inferred from homology"/>
<gene>
    <name evidence="1" type="primary">rpsG</name>
    <name type="ordered locus">Csac_0956</name>
</gene>
<comment type="function">
    <text evidence="1">One of the primary rRNA binding proteins, it binds directly to 16S rRNA where it nucleates assembly of the head domain of the 30S subunit. Is located at the subunit interface close to the decoding center, probably blocks exit of the E-site tRNA.</text>
</comment>
<comment type="subunit">
    <text evidence="1">Part of the 30S ribosomal subunit. Contacts proteins S9 and S11.</text>
</comment>
<comment type="similarity">
    <text evidence="1">Belongs to the universal ribosomal protein uS7 family.</text>
</comment>
<keyword id="KW-0687">Ribonucleoprotein</keyword>
<keyword id="KW-0689">Ribosomal protein</keyword>
<keyword id="KW-0694">RNA-binding</keyword>
<keyword id="KW-0699">rRNA-binding</keyword>
<keyword id="KW-0820">tRNA-binding</keyword>
<reference key="1">
    <citation type="submission" date="2007-04" db="EMBL/GenBank/DDBJ databases">
        <title>Genome sequence of the thermophilic hydrogen-producing bacterium Caldicellulosiruptor saccharolyticus DSM 8903.</title>
        <authorList>
            <person name="Copeland A."/>
            <person name="Lucas S."/>
            <person name="Lapidus A."/>
            <person name="Barry K."/>
            <person name="Detter J.C."/>
            <person name="Glavina del Rio T."/>
            <person name="Hammon N."/>
            <person name="Israni S."/>
            <person name="Dalin E."/>
            <person name="Tice H."/>
            <person name="Pitluck S."/>
            <person name="Kiss H."/>
            <person name="Brettin T."/>
            <person name="Bruce D."/>
            <person name="Han C."/>
            <person name="Schmutz J."/>
            <person name="Larimer F."/>
            <person name="Land M."/>
            <person name="Hauser L."/>
            <person name="Kyrpides N."/>
            <person name="Lykidis A."/>
            <person name="van de Werken H.J.G."/>
            <person name="Verhaart M.R.A."/>
            <person name="VanFossen A.L."/>
            <person name="Lewis D.L."/>
            <person name="Nichols J.D."/>
            <person name="Goorissen H.P."/>
            <person name="van Niel E.W.J."/>
            <person name="Stams F.J.M."/>
            <person name="Willquist K.U."/>
            <person name="Ward D.E."/>
            <person name="van der Oost J."/>
            <person name="Kelly R.M."/>
            <person name="Kengen S.M.W."/>
            <person name="Richardson P."/>
        </authorList>
    </citation>
    <scope>NUCLEOTIDE SEQUENCE [LARGE SCALE GENOMIC DNA]</scope>
    <source>
        <strain>ATCC 43494 / DSM 8903 / Tp8T 6331</strain>
    </source>
</reference>
<evidence type="ECO:0000255" key="1">
    <source>
        <dbReference type="HAMAP-Rule" id="MF_00480"/>
    </source>
</evidence>
<evidence type="ECO:0000305" key="2"/>
<organism>
    <name type="scientific">Caldicellulosiruptor saccharolyticus (strain ATCC 43494 / DSM 8903 / Tp8T 6331)</name>
    <dbReference type="NCBI Taxonomy" id="351627"/>
    <lineage>
        <taxon>Bacteria</taxon>
        <taxon>Bacillati</taxon>
        <taxon>Bacillota</taxon>
        <taxon>Bacillota incertae sedis</taxon>
        <taxon>Caldicellulosiruptorales</taxon>
        <taxon>Caldicellulosiruptoraceae</taxon>
        <taxon>Caldicellulosiruptor</taxon>
    </lineage>
</organism>
<dbReference type="EMBL" id="CP000679">
    <property type="protein sequence ID" value="ABP66570.1"/>
    <property type="molecule type" value="Genomic_DNA"/>
</dbReference>
<dbReference type="RefSeq" id="WP_011916516.1">
    <property type="nucleotide sequence ID" value="NC_009437.1"/>
</dbReference>
<dbReference type="SMR" id="A4XI35"/>
<dbReference type="STRING" id="351627.Csac_0956"/>
<dbReference type="KEGG" id="csc:Csac_0956"/>
<dbReference type="eggNOG" id="COG0049">
    <property type="taxonomic scope" value="Bacteria"/>
</dbReference>
<dbReference type="HOGENOM" id="CLU_072226_1_1_9"/>
<dbReference type="OrthoDB" id="9807653at2"/>
<dbReference type="Proteomes" id="UP000000256">
    <property type="component" value="Chromosome"/>
</dbReference>
<dbReference type="GO" id="GO:0015935">
    <property type="term" value="C:small ribosomal subunit"/>
    <property type="evidence" value="ECO:0007669"/>
    <property type="project" value="InterPro"/>
</dbReference>
<dbReference type="GO" id="GO:0019843">
    <property type="term" value="F:rRNA binding"/>
    <property type="evidence" value="ECO:0007669"/>
    <property type="project" value="UniProtKB-UniRule"/>
</dbReference>
<dbReference type="GO" id="GO:0003735">
    <property type="term" value="F:structural constituent of ribosome"/>
    <property type="evidence" value="ECO:0007669"/>
    <property type="project" value="InterPro"/>
</dbReference>
<dbReference type="GO" id="GO:0000049">
    <property type="term" value="F:tRNA binding"/>
    <property type="evidence" value="ECO:0007669"/>
    <property type="project" value="UniProtKB-UniRule"/>
</dbReference>
<dbReference type="GO" id="GO:0006412">
    <property type="term" value="P:translation"/>
    <property type="evidence" value="ECO:0007669"/>
    <property type="project" value="UniProtKB-UniRule"/>
</dbReference>
<dbReference type="CDD" id="cd14869">
    <property type="entry name" value="uS7_Bacteria"/>
    <property type="match status" value="1"/>
</dbReference>
<dbReference type="FunFam" id="1.10.455.10:FF:000001">
    <property type="entry name" value="30S ribosomal protein S7"/>
    <property type="match status" value="1"/>
</dbReference>
<dbReference type="Gene3D" id="1.10.455.10">
    <property type="entry name" value="Ribosomal protein S7 domain"/>
    <property type="match status" value="1"/>
</dbReference>
<dbReference type="HAMAP" id="MF_00480_B">
    <property type="entry name" value="Ribosomal_uS7_B"/>
    <property type="match status" value="1"/>
</dbReference>
<dbReference type="InterPro" id="IPR000235">
    <property type="entry name" value="Ribosomal_uS7"/>
</dbReference>
<dbReference type="InterPro" id="IPR005717">
    <property type="entry name" value="Ribosomal_uS7_bac/org-type"/>
</dbReference>
<dbReference type="InterPro" id="IPR020606">
    <property type="entry name" value="Ribosomal_uS7_CS"/>
</dbReference>
<dbReference type="InterPro" id="IPR023798">
    <property type="entry name" value="Ribosomal_uS7_dom"/>
</dbReference>
<dbReference type="InterPro" id="IPR036823">
    <property type="entry name" value="Ribosomal_uS7_dom_sf"/>
</dbReference>
<dbReference type="NCBIfam" id="TIGR01029">
    <property type="entry name" value="rpsG_bact"/>
    <property type="match status" value="1"/>
</dbReference>
<dbReference type="PANTHER" id="PTHR11205">
    <property type="entry name" value="RIBOSOMAL PROTEIN S7"/>
    <property type="match status" value="1"/>
</dbReference>
<dbReference type="Pfam" id="PF00177">
    <property type="entry name" value="Ribosomal_S7"/>
    <property type="match status" value="1"/>
</dbReference>
<dbReference type="PIRSF" id="PIRSF002122">
    <property type="entry name" value="RPS7p_RPS7a_RPS5e_RPS7o"/>
    <property type="match status" value="1"/>
</dbReference>
<dbReference type="SUPFAM" id="SSF47973">
    <property type="entry name" value="Ribosomal protein S7"/>
    <property type="match status" value="1"/>
</dbReference>
<dbReference type="PROSITE" id="PS00052">
    <property type="entry name" value="RIBOSOMAL_S7"/>
    <property type="match status" value="1"/>
</dbReference>
<name>RS7_CALS8</name>
<protein>
    <recommendedName>
        <fullName evidence="1">Small ribosomal subunit protein uS7</fullName>
    </recommendedName>
    <alternativeName>
        <fullName evidence="2">30S ribosomal protein S7</fullName>
    </alternativeName>
</protein>
<sequence length="157" mass="17944">MPRKGPVKKREILPDPVYNDKVVAKLINKVMYDGKKSIAQKIVYGAFDIVREKTGKDPLEVLEAALNNVMPVLEVRPRRVGGATYQIPIEVSPDRRLSLGIRWLVEYARERKDKRTMKEKLAAEIMDAANNTGGAVKKKEDTHRMAEANRAFAHYRW</sequence>
<accession>A4XI35</accession>